<name>NHAP2_SODGM</name>
<organism>
    <name type="scientific">Sodalis glossinidius (strain morsitans)</name>
    <dbReference type="NCBI Taxonomy" id="343509"/>
    <lineage>
        <taxon>Bacteria</taxon>
        <taxon>Pseudomonadati</taxon>
        <taxon>Pseudomonadota</taxon>
        <taxon>Gammaproteobacteria</taxon>
        <taxon>Enterobacterales</taxon>
        <taxon>Bruguierivoracaceae</taxon>
        <taxon>Sodalis</taxon>
    </lineage>
</organism>
<dbReference type="EMBL" id="AP008232">
    <property type="protein sequence ID" value="BAE74618.1"/>
    <property type="molecule type" value="Genomic_DNA"/>
</dbReference>
<dbReference type="RefSeq" id="WP_011411171.1">
    <property type="nucleotide sequence ID" value="NC_007712.1"/>
</dbReference>
<dbReference type="SMR" id="Q2NTA7"/>
<dbReference type="KEGG" id="sgl:SG1343"/>
<dbReference type="eggNOG" id="COG3263">
    <property type="taxonomic scope" value="Bacteria"/>
</dbReference>
<dbReference type="HOGENOM" id="CLU_005912_9_2_6"/>
<dbReference type="OrthoDB" id="9810759at2"/>
<dbReference type="BioCyc" id="SGLO343509:SGP1_RS11815-MONOMER"/>
<dbReference type="Proteomes" id="UP000001932">
    <property type="component" value="Chromosome"/>
</dbReference>
<dbReference type="GO" id="GO:0005886">
    <property type="term" value="C:plasma membrane"/>
    <property type="evidence" value="ECO:0007669"/>
    <property type="project" value="UniProtKB-SubCell"/>
</dbReference>
<dbReference type="GO" id="GO:0050660">
    <property type="term" value="F:flavin adenine dinucleotide binding"/>
    <property type="evidence" value="ECO:0007669"/>
    <property type="project" value="InterPro"/>
</dbReference>
<dbReference type="GO" id="GO:0015386">
    <property type="term" value="F:potassium:proton antiporter activity"/>
    <property type="evidence" value="ECO:0007669"/>
    <property type="project" value="UniProtKB-UniRule"/>
</dbReference>
<dbReference type="GO" id="GO:0006884">
    <property type="term" value="P:cell volume homeostasis"/>
    <property type="evidence" value="ECO:0007669"/>
    <property type="project" value="InterPro"/>
</dbReference>
<dbReference type="Gene3D" id="1.20.1530.20">
    <property type="match status" value="1"/>
</dbReference>
<dbReference type="Gene3D" id="3.30.465.10">
    <property type="match status" value="1"/>
</dbReference>
<dbReference type="Gene3D" id="3.30.70.1450">
    <property type="entry name" value="Regulator of K+ conductance, C-terminal domain"/>
    <property type="match status" value="1"/>
</dbReference>
<dbReference type="HAMAP" id="MF_01075">
    <property type="entry name" value="NhaP2"/>
    <property type="match status" value="1"/>
</dbReference>
<dbReference type="InterPro" id="IPR006153">
    <property type="entry name" value="Cation/H_exchanger_TM"/>
</dbReference>
<dbReference type="InterPro" id="IPR036318">
    <property type="entry name" value="FAD-bd_PCMH-like_sf"/>
</dbReference>
<dbReference type="InterPro" id="IPR016169">
    <property type="entry name" value="FAD-bd_PCMH_sub2"/>
</dbReference>
<dbReference type="InterPro" id="IPR038770">
    <property type="entry name" value="Na+/solute_symporter_sf"/>
</dbReference>
<dbReference type="InterPro" id="IPR023729">
    <property type="entry name" value="NhaP2"/>
</dbReference>
<dbReference type="InterPro" id="IPR006037">
    <property type="entry name" value="RCK_C"/>
</dbReference>
<dbReference type="InterPro" id="IPR036721">
    <property type="entry name" value="RCK_C_sf"/>
</dbReference>
<dbReference type="InterPro" id="IPR005170">
    <property type="entry name" value="Transptr-assoc_dom"/>
</dbReference>
<dbReference type="NCBIfam" id="NF003714">
    <property type="entry name" value="PRK05326.1-1"/>
    <property type="match status" value="1"/>
</dbReference>
<dbReference type="NCBIfam" id="NF003715">
    <property type="entry name" value="PRK05326.1-2"/>
    <property type="match status" value="1"/>
</dbReference>
<dbReference type="NCBIfam" id="NF003716">
    <property type="entry name" value="PRK05326.1-3"/>
    <property type="match status" value="1"/>
</dbReference>
<dbReference type="PANTHER" id="PTHR32507:SF7">
    <property type="entry name" value="K(+)_H(+) ANTIPORTER NHAP2"/>
    <property type="match status" value="1"/>
</dbReference>
<dbReference type="PANTHER" id="PTHR32507">
    <property type="entry name" value="NA(+)/H(+) ANTIPORTER 1"/>
    <property type="match status" value="1"/>
</dbReference>
<dbReference type="Pfam" id="PF03471">
    <property type="entry name" value="CorC_HlyC"/>
    <property type="match status" value="1"/>
</dbReference>
<dbReference type="Pfam" id="PF00999">
    <property type="entry name" value="Na_H_Exchanger"/>
    <property type="match status" value="1"/>
</dbReference>
<dbReference type="Pfam" id="PF02080">
    <property type="entry name" value="TrkA_C"/>
    <property type="match status" value="1"/>
</dbReference>
<dbReference type="SMART" id="SM01091">
    <property type="entry name" value="CorC_HlyC"/>
    <property type="match status" value="1"/>
</dbReference>
<dbReference type="SUPFAM" id="SSF56176">
    <property type="entry name" value="FAD-binding/transporter-associated domain-like"/>
    <property type="match status" value="1"/>
</dbReference>
<dbReference type="SUPFAM" id="SSF116726">
    <property type="entry name" value="TrkA C-terminal domain-like"/>
    <property type="match status" value="1"/>
</dbReference>
<dbReference type="PROSITE" id="PS51202">
    <property type="entry name" value="RCK_C"/>
    <property type="match status" value="1"/>
</dbReference>
<comment type="function">
    <text evidence="1">K(+)/H(+) antiporter that extrudes potassium in exchange for external protons and maintains the internal concentration of potassium under toxic levels.</text>
</comment>
<comment type="catalytic activity">
    <reaction evidence="1">
        <text>K(+)(in) + H(+)(out) = K(+)(out) + H(+)(in)</text>
        <dbReference type="Rhea" id="RHEA:29467"/>
        <dbReference type="ChEBI" id="CHEBI:15378"/>
        <dbReference type="ChEBI" id="CHEBI:29103"/>
    </reaction>
    <physiologicalReaction direction="left-to-right" evidence="1">
        <dbReference type="Rhea" id="RHEA:29468"/>
    </physiologicalReaction>
</comment>
<comment type="subcellular location">
    <subcellularLocation>
        <location evidence="1">Cell inner membrane</location>
        <topology evidence="1">Multi-pass membrane protein</topology>
    </subcellularLocation>
</comment>
<comment type="similarity">
    <text evidence="1">Belongs to the monovalent cation:proton antiporter 1 (CPA1) transporter (TC 2.A.36) family. NhaP2 subfamily.</text>
</comment>
<protein>
    <recommendedName>
        <fullName evidence="1">K(+)/H(+) antiporter NhaP2</fullName>
    </recommendedName>
    <alternativeName>
        <fullName evidence="1">Potassium/proton antiporter NhaP2</fullName>
    </alternativeName>
</protein>
<evidence type="ECO:0000255" key="1">
    <source>
        <dbReference type="HAMAP-Rule" id="MF_01075"/>
    </source>
</evidence>
<feature type="chain" id="PRO_0000278155" description="K(+)/H(+) antiporter NhaP2">
    <location>
        <begin position="1"/>
        <end position="576"/>
    </location>
</feature>
<feature type="transmembrane region" description="Helical" evidence="1">
    <location>
        <begin position="6"/>
        <end position="26"/>
    </location>
</feature>
<feature type="transmembrane region" description="Helical" evidence="1">
    <location>
        <begin position="30"/>
        <end position="50"/>
    </location>
</feature>
<feature type="transmembrane region" description="Helical" evidence="1">
    <location>
        <begin position="58"/>
        <end position="78"/>
    </location>
</feature>
<feature type="transmembrane region" description="Helical" evidence="1">
    <location>
        <begin position="95"/>
        <end position="115"/>
    </location>
</feature>
<feature type="transmembrane region" description="Helical" evidence="1">
    <location>
        <begin position="122"/>
        <end position="142"/>
    </location>
</feature>
<feature type="transmembrane region" description="Helical" evidence="1">
    <location>
        <begin position="163"/>
        <end position="183"/>
    </location>
</feature>
<feature type="transmembrane region" description="Helical" evidence="1">
    <location>
        <begin position="185"/>
        <end position="205"/>
    </location>
</feature>
<feature type="transmembrane region" description="Helical" evidence="1">
    <location>
        <begin position="221"/>
        <end position="241"/>
    </location>
</feature>
<feature type="transmembrane region" description="Helical" evidence="1">
    <location>
        <begin position="270"/>
        <end position="290"/>
    </location>
</feature>
<feature type="transmembrane region" description="Helical" evidence="1">
    <location>
        <begin position="293"/>
        <end position="313"/>
    </location>
</feature>
<feature type="transmembrane region" description="Helical" evidence="1">
    <location>
        <begin position="334"/>
        <end position="354"/>
    </location>
</feature>
<feature type="transmembrane region" description="Helical" evidence="1">
    <location>
        <begin position="367"/>
        <end position="387"/>
    </location>
</feature>
<feature type="domain" description="RCK C-terminal" evidence="1">
    <location>
        <begin position="404"/>
        <end position="485"/>
    </location>
</feature>
<gene>
    <name evidence="1" type="primary">nhaP2</name>
    <name type="synonym">cvrA</name>
    <name type="ordered locus">SG1343</name>
</gene>
<reference key="1">
    <citation type="journal article" date="2006" name="Genome Res.">
        <title>Massive genome erosion and functional adaptations provide insights into the symbiotic lifestyle of Sodalis glossinidius in the tsetse host.</title>
        <authorList>
            <person name="Toh H."/>
            <person name="Weiss B.L."/>
            <person name="Perkin S.A.H."/>
            <person name="Yamashita A."/>
            <person name="Oshima K."/>
            <person name="Hattori M."/>
            <person name="Aksoy S."/>
        </authorList>
    </citation>
    <scope>NUCLEOTIDE SEQUENCE [LARGE SCALE GENOMIC DNA]</scope>
    <source>
        <strain>morsitans</strain>
    </source>
</reference>
<sequence length="576" mass="61949">MDSSTIISLFIIGSILVGGSILLSAFSSRLGIPILVIFLAIGMLAGIDGLGGIAFDNYPVAYLISNLALAVILLDGGMRTRATAFRVALWPSLSLATVGVIITAGLTGIAAAWLFGLDKIEGMLIGAIVGSTDAAAVFSLLGDKGLNERVTSTLEIESGSNDPMAVFLTITLIAMIQNGQIHLDWLFLVHLIREFGLGVILGLGGGWLLQQVINRITLTNALYPLLAVSGGIMMFALTTALEGSGILAVYLCGFVLGNRPIRNRYGILQTFDGMAWLSQICMFLALGLLVTPSDLWMIAIPALILSLWLMLVARPLSIFVGLLPFRNYTTRERVFLSWVGLRGAVPIILAVFPMMAGLDNAHMYFNVAFFIVLISLLLQGTSLGFAARLAKVVVPPTASPISRVGMDIHPENPWEQFIYQLGEENWCVGAALRDLKMPRHTRIAALFRDNVLLHPTANTRLREGDVLCVIGRERDLPALGRLFSQSPPVALDQRFFGDFILEASANLRDVSSIYGLEFAGEVDGELTLGQFVMALLGGGEPVVGDNVVAEGVVWTIAEKDEQKVSKIGIKIADDPA</sequence>
<proteinExistence type="inferred from homology"/>
<keyword id="KW-0050">Antiport</keyword>
<keyword id="KW-0997">Cell inner membrane</keyword>
<keyword id="KW-1003">Cell membrane</keyword>
<keyword id="KW-0406">Ion transport</keyword>
<keyword id="KW-0472">Membrane</keyword>
<keyword id="KW-0630">Potassium</keyword>
<keyword id="KW-0633">Potassium transport</keyword>
<keyword id="KW-0812">Transmembrane</keyword>
<keyword id="KW-1133">Transmembrane helix</keyword>
<keyword id="KW-0813">Transport</keyword>
<accession>Q2NTA7</accession>